<reference key="1">
    <citation type="journal article" date="2003" name="Nature">
        <title>Unique physiological and pathogenic features of Leptospira interrogans revealed by whole-genome sequencing.</title>
        <authorList>
            <person name="Ren S.-X."/>
            <person name="Fu G."/>
            <person name="Jiang X.-G."/>
            <person name="Zeng R."/>
            <person name="Miao Y.-G."/>
            <person name="Xu H."/>
            <person name="Zhang Y.-X."/>
            <person name="Xiong H."/>
            <person name="Lu G."/>
            <person name="Lu L.-F."/>
            <person name="Jiang H.-Q."/>
            <person name="Jia J."/>
            <person name="Tu Y.-F."/>
            <person name="Jiang J.-X."/>
            <person name="Gu W.-Y."/>
            <person name="Zhang Y.-Q."/>
            <person name="Cai Z."/>
            <person name="Sheng H.-H."/>
            <person name="Yin H.-F."/>
            <person name="Zhang Y."/>
            <person name="Zhu G.-F."/>
            <person name="Wan M."/>
            <person name="Huang H.-L."/>
            <person name="Qian Z."/>
            <person name="Wang S.-Y."/>
            <person name="Ma W."/>
            <person name="Yao Z.-J."/>
            <person name="Shen Y."/>
            <person name="Qiang B.-Q."/>
            <person name="Xia Q.-C."/>
            <person name="Guo X.-K."/>
            <person name="Danchin A."/>
            <person name="Saint Girons I."/>
            <person name="Somerville R.L."/>
            <person name="Wen Y.-M."/>
            <person name="Shi M.-H."/>
            <person name="Chen Z."/>
            <person name="Xu J.-G."/>
            <person name="Zhao G.-P."/>
        </authorList>
    </citation>
    <scope>NUCLEOTIDE SEQUENCE [LARGE SCALE GENOMIC DNA]</scope>
    <source>
        <strain>56601</strain>
    </source>
</reference>
<organism>
    <name type="scientific">Leptospira interrogans serogroup Icterohaemorrhagiae serovar Lai (strain 56601)</name>
    <dbReference type="NCBI Taxonomy" id="189518"/>
    <lineage>
        <taxon>Bacteria</taxon>
        <taxon>Pseudomonadati</taxon>
        <taxon>Spirochaetota</taxon>
        <taxon>Spirochaetia</taxon>
        <taxon>Leptospirales</taxon>
        <taxon>Leptospiraceae</taxon>
        <taxon>Leptospira</taxon>
    </lineage>
</organism>
<gene>
    <name evidence="1" type="primary">pyrF</name>
    <name type="ordered locus">LB_310</name>
</gene>
<name>PYRF_LEPIN</name>
<comment type="catalytic activity">
    <reaction evidence="1">
        <text>orotidine 5'-phosphate + H(+) = UMP + CO2</text>
        <dbReference type="Rhea" id="RHEA:11596"/>
        <dbReference type="ChEBI" id="CHEBI:15378"/>
        <dbReference type="ChEBI" id="CHEBI:16526"/>
        <dbReference type="ChEBI" id="CHEBI:57538"/>
        <dbReference type="ChEBI" id="CHEBI:57865"/>
        <dbReference type="EC" id="4.1.1.23"/>
    </reaction>
</comment>
<comment type="pathway">
    <text evidence="1">Pyrimidine metabolism; UMP biosynthesis via de novo pathway; UMP from orotate: step 2/2.</text>
</comment>
<comment type="similarity">
    <text evidence="1">Belongs to the OMP decarboxylase family. Type 2 subfamily.</text>
</comment>
<sequence length="275" mass="30747">MGGKMNFQSKFLTRSQSLKSLLCVGLDPDFDKLPEIVKRSPEPLVQFCKEIIDATASYAVAYKPNIAFFEVFGSSGIRQFEKVIGHLKSNYPQIPIVADVKRGDLDNTARQYAKYYFGDLQVDSLTLSPYMGLDSIRPFLEYQDYLIFWLCLTSNPDSAQFQKKRFSETGRTLYEEVVYVANLVAISNLGFVVGATSPSELETLRTQNPNRIFLIPGFGAQGAKLENLLPVCGRNSLINSSRGIHFASNGSDFAVRAGQEAEKIHKMMQTHFIGL</sequence>
<dbReference type="EC" id="4.1.1.23" evidence="1"/>
<dbReference type="EMBL" id="AE010301">
    <property type="protein sequence ID" value="AAN51869.1"/>
    <property type="molecule type" value="Genomic_DNA"/>
</dbReference>
<dbReference type="RefSeq" id="NP_714854.1">
    <property type="nucleotide sequence ID" value="NC_004343.2"/>
</dbReference>
<dbReference type="SMR" id="Q8EXA4"/>
<dbReference type="STRING" id="189518.LB_310"/>
<dbReference type="PaxDb" id="189518-LB_310"/>
<dbReference type="EnsemblBacteria" id="AAN51869">
    <property type="protein sequence ID" value="AAN51869"/>
    <property type="gene ID" value="LB_310"/>
</dbReference>
<dbReference type="KEGG" id="lil:LB_310"/>
<dbReference type="PATRIC" id="fig|189518.3.peg.4631"/>
<dbReference type="HOGENOM" id="CLU_060704_1_0_12"/>
<dbReference type="InParanoid" id="Q8EXA4"/>
<dbReference type="OrthoDB" id="9808470at2"/>
<dbReference type="UniPathway" id="UPA00070">
    <property type="reaction ID" value="UER00120"/>
</dbReference>
<dbReference type="Proteomes" id="UP000001408">
    <property type="component" value="Chromosome II"/>
</dbReference>
<dbReference type="GO" id="GO:0004590">
    <property type="term" value="F:orotidine-5'-phosphate decarboxylase activity"/>
    <property type="evidence" value="ECO:0007669"/>
    <property type="project" value="UniProtKB-UniRule"/>
</dbReference>
<dbReference type="GO" id="GO:0006207">
    <property type="term" value="P:'de novo' pyrimidine nucleobase biosynthetic process"/>
    <property type="evidence" value="ECO:0007669"/>
    <property type="project" value="InterPro"/>
</dbReference>
<dbReference type="GO" id="GO:0044205">
    <property type="term" value="P:'de novo' UMP biosynthetic process"/>
    <property type="evidence" value="ECO:0007669"/>
    <property type="project" value="UniProtKB-UniRule"/>
</dbReference>
<dbReference type="CDD" id="cd04725">
    <property type="entry name" value="OMP_decarboxylase_like"/>
    <property type="match status" value="1"/>
</dbReference>
<dbReference type="FunFam" id="3.20.20.70:FF:000157">
    <property type="entry name" value="Orotidine 5'-phosphate decarboxylase"/>
    <property type="match status" value="1"/>
</dbReference>
<dbReference type="Gene3D" id="3.20.20.70">
    <property type="entry name" value="Aldolase class I"/>
    <property type="match status" value="1"/>
</dbReference>
<dbReference type="HAMAP" id="MF_01215">
    <property type="entry name" value="OMPdecase_type2"/>
    <property type="match status" value="1"/>
</dbReference>
<dbReference type="InterPro" id="IPR013785">
    <property type="entry name" value="Aldolase_TIM"/>
</dbReference>
<dbReference type="InterPro" id="IPR011995">
    <property type="entry name" value="OMPdecase_type-2"/>
</dbReference>
<dbReference type="InterPro" id="IPR001754">
    <property type="entry name" value="OMPdeCOase_dom"/>
</dbReference>
<dbReference type="InterPro" id="IPR011060">
    <property type="entry name" value="RibuloseP-bd_barrel"/>
</dbReference>
<dbReference type="NCBIfam" id="TIGR02127">
    <property type="entry name" value="pyrF_sub2"/>
    <property type="match status" value="1"/>
</dbReference>
<dbReference type="PANTHER" id="PTHR43375">
    <property type="entry name" value="OROTIDINE 5'-PHOSPHATE DECARBOXYLASE"/>
    <property type="match status" value="1"/>
</dbReference>
<dbReference type="PANTHER" id="PTHR43375:SF1">
    <property type="entry name" value="OROTIDINE 5'-PHOSPHATE DECARBOXYLASE"/>
    <property type="match status" value="1"/>
</dbReference>
<dbReference type="Pfam" id="PF00215">
    <property type="entry name" value="OMPdecase"/>
    <property type="match status" value="1"/>
</dbReference>
<dbReference type="SMART" id="SM00934">
    <property type="entry name" value="OMPdecase"/>
    <property type="match status" value="1"/>
</dbReference>
<dbReference type="SUPFAM" id="SSF51366">
    <property type="entry name" value="Ribulose-phoshate binding barrel"/>
    <property type="match status" value="1"/>
</dbReference>
<keyword id="KW-0210">Decarboxylase</keyword>
<keyword id="KW-0456">Lyase</keyword>
<keyword id="KW-0665">Pyrimidine biosynthesis</keyword>
<keyword id="KW-1185">Reference proteome</keyword>
<evidence type="ECO:0000255" key="1">
    <source>
        <dbReference type="HAMAP-Rule" id="MF_01215"/>
    </source>
</evidence>
<accession>Q8EXA4</accession>
<protein>
    <recommendedName>
        <fullName evidence="1">Orotidine 5'-phosphate decarboxylase</fullName>
        <ecNumber evidence="1">4.1.1.23</ecNumber>
    </recommendedName>
    <alternativeName>
        <fullName evidence="1">OMP decarboxylase</fullName>
        <shortName evidence="1">OMPDCase</shortName>
        <shortName evidence="1">OMPdecase</shortName>
    </alternativeName>
</protein>
<proteinExistence type="inferred from homology"/>
<feature type="chain" id="PRO_0000134627" description="Orotidine 5'-phosphate decarboxylase">
    <location>
        <begin position="1"/>
        <end position="275"/>
    </location>
</feature>
<feature type="active site" description="Proton donor" evidence="1">
    <location>
        <position position="101"/>
    </location>
</feature>